<reference key="1">
    <citation type="submission" date="1998-11" db="UniProtKB">
        <title>Characterization of a surface protein in macrocysts of Dictyostelium mucoroides.</title>
        <authorList>
            <person name="Schreiner S.J."/>
        </authorList>
    </citation>
    <scope>PROTEIN SEQUENCE</scope>
    <source>
        <strain>DM-7</strain>
    </source>
</reference>
<protein>
    <recommendedName>
        <fullName>Surface protein P34</fullName>
    </recommendedName>
</protein>
<name>SP34_DICMU</name>
<comment type="function">
    <text>This protein is present in the macrocyst primary wall which is produced by amoebae during the onset of sexual reproduction.</text>
</comment>
<comment type="subcellular location">
    <subcellularLocation>
        <location>Secreted</location>
        <location>Primary cell wall</location>
    </subcellularLocation>
    <text>Macrocyst primary wall.</text>
</comment>
<feature type="chain" id="PRO_0000072064" description="Surface protein P34">
    <location>
        <begin position="1"/>
        <end position="10" status="greater than"/>
    </location>
</feature>
<feature type="non-terminal residue">
    <location>
        <position position="10"/>
    </location>
</feature>
<dbReference type="GO" id="GO:0005576">
    <property type="term" value="C:extracellular region"/>
    <property type="evidence" value="ECO:0007669"/>
    <property type="project" value="UniProtKB-KW"/>
</dbReference>
<accession>P81545</accession>
<organism>
    <name type="scientific">Dictyostelium mucoroides</name>
    <name type="common">Slime mold</name>
    <dbReference type="NCBI Taxonomy" id="31287"/>
    <lineage>
        <taxon>Eukaryota</taxon>
        <taxon>Amoebozoa</taxon>
        <taxon>Evosea</taxon>
        <taxon>Eumycetozoa</taxon>
        <taxon>Dictyostelia</taxon>
        <taxon>Dictyosteliales</taxon>
        <taxon>Dictyosteliaceae</taxon>
        <taxon>Dictyostelium</taxon>
    </lineage>
</organism>
<gene>
    <name type="primary">P34</name>
</gene>
<keyword id="KW-0134">Cell wall</keyword>
<keyword id="KW-0903">Direct protein sequencing</keyword>
<keyword id="KW-0964">Secreted</keyword>
<sequence>XEIYNKDGNK</sequence>
<proteinExistence type="evidence at protein level"/>